<reference key="1">
    <citation type="journal article" date="2000" name="Nature">
        <title>DNA sequence of both chromosomes of the cholera pathogen Vibrio cholerae.</title>
        <authorList>
            <person name="Heidelberg J.F."/>
            <person name="Eisen J.A."/>
            <person name="Nelson W.C."/>
            <person name="Clayton R.A."/>
            <person name="Gwinn M.L."/>
            <person name="Dodson R.J."/>
            <person name="Haft D.H."/>
            <person name="Hickey E.K."/>
            <person name="Peterson J.D."/>
            <person name="Umayam L.A."/>
            <person name="Gill S.R."/>
            <person name="Nelson K.E."/>
            <person name="Read T.D."/>
            <person name="Tettelin H."/>
            <person name="Richardson D.L."/>
            <person name="Ermolaeva M.D."/>
            <person name="Vamathevan J.J."/>
            <person name="Bass S."/>
            <person name="Qin H."/>
            <person name="Dragoi I."/>
            <person name="Sellers P."/>
            <person name="McDonald L.A."/>
            <person name="Utterback T.R."/>
            <person name="Fleischmann R.D."/>
            <person name="Nierman W.C."/>
            <person name="White O."/>
            <person name="Salzberg S.L."/>
            <person name="Smith H.O."/>
            <person name="Colwell R.R."/>
            <person name="Mekalanos J.J."/>
            <person name="Venter J.C."/>
            <person name="Fraser C.M."/>
        </authorList>
    </citation>
    <scope>NUCLEOTIDE SEQUENCE [LARGE SCALE GENOMIC DNA]</scope>
    <source>
        <strain>ATCC 39315 / El Tor Inaba N16961</strain>
    </source>
</reference>
<proteinExistence type="inferred from homology"/>
<sequence>MAHKKAGGSTRNGRDSESKRLGVKRFGGESVLAGNIIVRQRGTKFHAGTNVGIGKDHTLFALSDGKVKFEVKGPNNRKFVSIETAE</sequence>
<keyword id="KW-1185">Reference proteome</keyword>
<keyword id="KW-0687">Ribonucleoprotein</keyword>
<keyword id="KW-0689">Ribosomal protein</keyword>
<dbReference type="EMBL" id="AE003852">
    <property type="protein sequence ID" value="AAF93609.1"/>
    <property type="molecule type" value="Genomic_DNA"/>
</dbReference>
<dbReference type="PIR" id="C82322">
    <property type="entry name" value="C82322"/>
</dbReference>
<dbReference type="RefSeq" id="NP_230090.1">
    <property type="nucleotide sequence ID" value="NC_002505.1"/>
</dbReference>
<dbReference type="RefSeq" id="WP_000940599.1">
    <property type="nucleotide sequence ID" value="NZ_LT906614.1"/>
</dbReference>
<dbReference type="SMR" id="Q9KUS9"/>
<dbReference type="STRING" id="243277.VC_0436"/>
<dbReference type="DNASU" id="2615697"/>
<dbReference type="EnsemblBacteria" id="AAF93609">
    <property type="protein sequence ID" value="AAF93609"/>
    <property type="gene ID" value="VC_0436"/>
</dbReference>
<dbReference type="GeneID" id="89515415"/>
<dbReference type="KEGG" id="vch:VC_0436"/>
<dbReference type="PATRIC" id="fig|243277.26.peg.410"/>
<dbReference type="eggNOG" id="COG0211">
    <property type="taxonomic scope" value="Bacteria"/>
</dbReference>
<dbReference type="HOGENOM" id="CLU_095424_4_1_6"/>
<dbReference type="Proteomes" id="UP000000584">
    <property type="component" value="Chromosome 1"/>
</dbReference>
<dbReference type="GO" id="GO:0022625">
    <property type="term" value="C:cytosolic large ribosomal subunit"/>
    <property type="evidence" value="ECO:0000318"/>
    <property type="project" value="GO_Central"/>
</dbReference>
<dbReference type="GO" id="GO:0003735">
    <property type="term" value="F:structural constituent of ribosome"/>
    <property type="evidence" value="ECO:0000318"/>
    <property type="project" value="GO_Central"/>
</dbReference>
<dbReference type="GO" id="GO:0006412">
    <property type="term" value="P:translation"/>
    <property type="evidence" value="ECO:0007669"/>
    <property type="project" value="UniProtKB-UniRule"/>
</dbReference>
<dbReference type="FunFam" id="2.40.50.100:FF:000001">
    <property type="entry name" value="50S ribosomal protein L27"/>
    <property type="match status" value="1"/>
</dbReference>
<dbReference type="Gene3D" id="2.40.50.100">
    <property type="match status" value="1"/>
</dbReference>
<dbReference type="HAMAP" id="MF_00539">
    <property type="entry name" value="Ribosomal_bL27"/>
    <property type="match status" value="1"/>
</dbReference>
<dbReference type="InterPro" id="IPR001684">
    <property type="entry name" value="Ribosomal_bL27"/>
</dbReference>
<dbReference type="InterPro" id="IPR018261">
    <property type="entry name" value="Ribosomal_bL27_CS"/>
</dbReference>
<dbReference type="NCBIfam" id="TIGR00062">
    <property type="entry name" value="L27"/>
    <property type="match status" value="1"/>
</dbReference>
<dbReference type="PANTHER" id="PTHR15893:SF0">
    <property type="entry name" value="LARGE RIBOSOMAL SUBUNIT PROTEIN BL27M"/>
    <property type="match status" value="1"/>
</dbReference>
<dbReference type="PANTHER" id="PTHR15893">
    <property type="entry name" value="RIBOSOMAL PROTEIN L27"/>
    <property type="match status" value="1"/>
</dbReference>
<dbReference type="Pfam" id="PF01016">
    <property type="entry name" value="Ribosomal_L27"/>
    <property type="match status" value="1"/>
</dbReference>
<dbReference type="PRINTS" id="PR00063">
    <property type="entry name" value="RIBOSOMALL27"/>
</dbReference>
<dbReference type="SUPFAM" id="SSF110324">
    <property type="entry name" value="Ribosomal L27 protein-like"/>
    <property type="match status" value="1"/>
</dbReference>
<dbReference type="PROSITE" id="PS00831">
    <property type="entry name" value="RIBOSOMAL_L27"/>
    <property type="match status" value="1"/>
</dbReference>
<evidence type="ECO:0000255" key="1">
    <source>
        <dbReference type="HAMAP-Rule" id="MF_00539"/>
    </source>
</evidence>
<evidence type="ECO:0000256" key="2">
    <source>
        <dbReference type="SAM" id="MobiDB-lite"/>
    </source>
</evidence>
<evidence type="ECO:0000305" key="3"/>
<protein>
    <recommendedName>
        <fullName evidence="1">Large ribosomal subunit protein bL27</fullName>
    </recommendedName>
    <alternativeName>
        <fullName evidence="3">50S ribosomal protein L27</fullName>
    </alternativeName>
</protein>
<feature type="chain" id="PRO_0000181201" description="Large ribosomal subunit protein bL27">
    <location>
        <begin position="1"/>
        <end position="86"/>
    </location>
</feature>
<feature type="region of interest" description="Disordered" evidence="2">
    <location>
        <begin position="1"/>
        <end position="22"/>
    </location>
</feature>
<name>RL27_VIBCH</name>
<comment type="similarity">
    <text evidence="1">Belongs to the bacterial ribosomal protein bL27 family.</text>
</comment>
<accession>Q9KUS9</accession>
<gene>
    <name evidence="1" type="primary">rpmA</name>
    <name type="ordered locus">VC_0436</name>
</gene>
<organism>
    <name type="scientific">Vibrio cholerae serotype O1 (strain ATCC 39315 / El Tor Inaba N16961)</name>
    <dbReference type="NCBI Taxonomy" id="243277"/>
    <lineage>
        <taxon>Bacteria</taxon>
        <taxon>Pseudomonadati</taxon>
        <taxon>Pseudomonadota</taxon>
        <taxon>Gammaproteobacteria</taxon>
        <taxon>Vibrionales</taxon>
        <taxon>Vibrionaceae</taxon>
        <taxon>Vibrio</taxon>
    </lineage>
</organism>